<accession>Q17WC3</accession>
<reference key="1">
    <citation type="journal article" date="2006" name="PLoS Genet.">
        <title>Who ate whom? Adaptive Helicobacter genomic changes that accompanied a host jump from early humans to large felines.</title>
        <authorList>
            <person name="Eppinger M."/>
            <person name="Baar C."/>
            <person name="Linz B."/>
            <person name="Raddatz G."/>
            <person name="Lanz C."/>
            <person name="Keller H."/>
            <person name="Morelli G."/>
            <person name="Gressmann H."/>
            <person name="Achtman M."/>
            <person name="Schuster S.C."/>
        </authorList>
    </citation>
    <scope>NUCLEOTIDE SEQUENCE [LARGE SCALE GENOMIC DNA]</scope>
    <source>
        <strain>Sheeba</strain>
    </source>
</reference>
<protein>
    <recommendedName>
        <fullName evidence="1">Large ribosomal subunit protein bL19</fullName>
    </recommendedName>
    <alternativeName>
        <fullName evidence="2">50S ribosomal protein L19</fullName>
    </alternativeName>
</protein>
<comment type="function">
    <text evidence="1">This protein is located at the 30S-50S ribosomal subunit interface and may play a role in the structure and function of the aminoacyl-tRNA binding site.</text>
</comment>
<comment type="similarity">
    <text evidence="1">Belongs to the bacterial ribosomal protein bL19 family.</text>
</comment>
<keyword id="KW-0687">Ribonucleoprotein</keyword>
<keyword id="KW-0689">Ribosomal protein</keyword>
<gene>
    <name evidence="1" type="primary">rplS</name>
    <name type="ordered locus">Hac_1314</name>
</gene>
<sequence length="118" mass="13740">MKNRYIQQFEDAQLKDKVMPQFKAGDTLRLGITIKEGEKTRTQYFEGVCIAIRGNGVDKTFRVRKMGANNIGVEKIFPFYSESLASVEVLRVGRVRRAKLYYLRDRRGKAARIKEIRH</sequence>
<feature type="chain" id="PRO_1000049686" description="Large ribosomal subunit protein bL19">
    <location>
        <begin position="1"/>
        <end position="118"/>
    </location>
</feature>
<evidence type="ECO:0000255" key="1">
    <source>
        <dbReference type="HAMAP-Rule" id="MF_00402"/>
    </source>
</evidence>
<evidence type="ECO:0000305" key="2"/>
<dbReference type="EMBL" id="AM260522">
    <property type="protein sequence ID" value="CAK00053.1"/>
    <property type="molecule type" value="Genomic_DNA"/>
</dbReference>
<dbReference type="RefSeq" id="WP_011578144.1">
    <property type="nucleotide sequence ID" value="NC_008229.1"/>
</dbReference>
<dbReference type="SMR" id="Q17WC3"/>
<dbReference type="STRING" id="382638.Hac_1314"/>
<dbReference type="GeneID" id="31758635"/>
<dbReference type="KEGG" id="hac:Hac_1314"/>
<dbReference type="eggNOG" id="COG0335">
    <property type="taxonomic scope" value="Bacteria"/>
</dbReference>
<dbReference type="HOGENOM" id="CLU_103507_2_1_7"/>
<dbReference type="OrthoDB" id="9803541at2"/>
<dbReference type="BioCyc" id="HACI382638:HAC_RS05635-MONOMER"/>
<dbReference type="Proteomes" id="UP000000775">
    <property type="component" value="Chromosome"/>
</dbReference>
<dbReference type="GO" id="GO:0022625">
    <property type="term" value="C:cytosolic large ribosomal subunit"/>
    <property type="evidence" value="ECO:0007669"/>
    <property type="project" value="TreeGrafter"/>
</dbReference>
<dbReference type="GO" id="GO:0003735">
    <property type="term" value="F:structural constituent of ribosome"/>
    <property type="evidence" value="ECO:0007669"/>
    <property type="project" value="InterPro"/>
</dbReference>
<dbReference type="GO" id="GO:0006412">
    <property type="term" value="P:translation"/>
    <property type="evidence" value="ECO:0007669"/>
    <property type="project" value="UniProtKB-UniRule"/>
</dbReference>
<dbReference type="FunFam" id="2.30.30.790:FF:000001">
    <property type="entry name" value="50S ribosomal protein L19"/>
    <property type="match status" value="1"/>
</dbReference>
<dbReference type="Gene3D" id="2.30.30.790">
    <property type="match status" value="1"/>
</dbReference>
<dbReference type="HAMAP" id="MF_00402">
    <property type="entry name" value="Ribosomal_bL19"/>
    <property type="match status" value="1"/>
</dbReference>
<dbReference type="InterPro" id="IPR001857">
    <property type="entry name" value="Ribosomal_bL19"/>
</dbReference>
<dbReference type="InterPro" id="IPR018257">
    <property type="entry name" value="Ribosomal_bL19_CS"/>
</dbReference>
<dbReference type="InterPro" id="IPR038657">
    <property type="entry name" value="Ribosomal_bL19_sf"/>
</dbReference>
<dbReference type="InterPro" id="IPR008991">
    <property type="entry name" value="Translation_prot_SH3-like_sf"/>
</dbReference>
<dbReference type="NCBIfam" id="TIGR01024">
    <property type="entry name" value="rplS_bact"/>
    <property type="match status" value="1"/>
</dbReference>
<dbReference type="PANTHER" id="PTHR15680:SF9">
    <property type="entry name" value="LARGE RIBOSOMAL SUBUNIT PROTEIN BL19M"/>
    <property type="match status" value="1"/>
</dbReference>
<dbReference type="PANTHER" id="PTHR15680">
    <property type="entry name" value="RIBOSOMAL PROTEIN L19"/>
    <property type="match status" value="1"/>
</dbReference>
<dbReference type="Pfam" id="PF01245">
    <property type="entry name" value="Ribosomal_L19"/>
    <property type="match status" value="1"/>
</dbReference>
<dbReference type="PIRSF" id="PIRSF002191">
    <property type="entry name" value="Ribosomal_L19"/>
    <property type="match status" value="1"/>
</dbReference>
<dbReference type="PRINTS" id="PR00061">
    <property type="entry name" value="RIBOSOMALL19"/>
</dbReference>
<dbReference type="SUPFAM" id="SSF50104">
    <property type="entry name" value="Translation proteins SH3-like domain"/>
    <property type="match status" value="1"/>
</dbReference>
<dbReference type="PROSITE" id="PS01015">
    <property type="entry name" value="RIBOSOMAL_L19"/>
    <property type="match status" value="1"/>
</dbReference>
<organism>
    <name type="scientific">Helicobacter acinonychis (strain Sheeba)</name>
    <dbReference type="NCBI Taxonomy" id="382638"/>
    <lineage>
        <taxon>Bacteria</taxon>
        <taxon>Pseudomonadati</taxon>
        <taxon>Campylobacterota</taxon>
        <taxon>Epsilonproteobacteria</taxon>
        <taxon>Campylobacterales</taxon>
        <taxon>Helicobacteraceae</taxon>
        <taxon>Helicobacter</taxon>
    </lineage>
</organism>
<name>RL19_HELAH</name>
<proteinExistence type="inferred from homology"/>